<proteinExistence type="inferred from homology"/>
<gene>
    <name type="primary">rpl-37a</name>
</gene>
<reference key="1">
    <citation type="journal article" date="2000" name="Biochem. J.">
        <title>Identification of abundant mRNAs from the third stage larvae of the parasitic nematode, Ostertagia ostertagi.</title>
        <authorList>
            <person name="Moore J."/>
            <person name="Tetley L."/>
            <person name="Devaney E."/>
        </authorList>
    </citation>
    <scope>NUCLEOTIDE SEQUENCE [MRNA]</scope>
</reference>
<comment type="similarity">
    <text evidence="2">Belongs to the eukaryotic ribosomal protein eL43 family.</text>
</comment>
<protein>
    <recommendedName>
        <fullName evidence="2">Large ribosomal subunit protein eL43</fullName>
    </recommendedName>
    <alternativeName>
        <fullName>60S ribosomal protein L37a</fullName>
    </alternativeName>
</protein>
<accession>O61598</accession>
<dbReference type="EMBL" id="AF052737">
    <property type="protein sequence ID" value="AAC08431.1"/>
    <property type="molecule type" value="mRNA"/>
</dbReference>
<dbReference type="SMR" id="O61598"/>
<dbReference type="GO" id="GO:1990904">
    <property type="term" value="C:ribonucleoprotein complex"/>
    <property type="evidence" value="ECO:0007669"/>
    <property type="project" value="UniProtKB-KW"/>
</dbReference>
<dbReference type="GO" id="GO:0005840">
    <property type="term" value="C:ribosome"/>
    <property type="evidence" value="ECO:0007669"/>
    <property type="project" value="UniProtKB-KW"/>
</dbReference>
<dbReference type="GO" id="GO:0003735">
    <property type="term" value="F:structural constituent of ribosome"/>
    <property type="evidence" value="ECO:0007669"/>
    <property type="project" value="InterPro"/>
</dbReference>
<dbReference type="GO" id="GO:0008270">
    <property type="term" value="F:zinc ion binding"/>
    <property type="evidence" value="ECO:0007669"/>
    <property type="project" value="UniProtKB-KW"/>
</dbReference>
<dbReference type="GO" id="GO:0006412">
    <property type="term" value="P:translation"/>
    <property type="evidence" value="ECO:0007669"/>
    <property type="project" value="InterPro"/>
</dbReference>
<dbReference type="FunFam" id="2.20.25.30:FF:000002">
    <property type="entry name" value="60S ribosomal protein L37a"/>
    <property type="match status" value="1"/>
</dbReference>
<dbReference type="Gene3D" id="2.20.25.30">
    <property type="match status" value="1"/>
</dbReference>
<dbReference type="HAMAP" id="MF_00327">
    <property type="entry name" value="Ribosomal_eL43"/>
    <property type="match status" value="1"/>
</dbReference>
<dbReference type="InterPro" id="IPR011331">
    <property type="entry name" value="Ribosomal_eL37/eL43"/>
</dbReference>
<dbReference type="InterPro" id="IPR002674">
    <property type="entry name" value="Ribosomal_eL43"/>
</dbReference>
<dbReference type="InterPro" id="IPR050522">
    <property type="entry name" value="Ribosomal_protein_eL43"/>
</dbReference>
<dbReference type="InterPro" id="IPR011332">
    <property type="entry name" value="Ribosomal_zn-bd"/>
</dbReference>
<dbReference type="NCBIfam" id="TIGR00280">
    <property type="entry name" value="eL43_euk_arch"/>
    <property type="match status" value="1"/>
</dbReference>
<dbReference type="NCBIfam" id="NF003058">
    <property type="entry name" value="PRK03976.1"/>
    <property type="match status" value="1"/>
</dbReference>
<dbReference type="PANTHER" id="PTHR48129">
    <property type="entry name" value="60S RIBOSOMAL PROTEIN L37A"/>
    <property type="match status" value="1"/>
</dbReference>
<dbReference type="PANTHER" id="PTHR48129:SF1">
    <property type="entry name" value="LARGE RIBOSOMAL SUBUNIT PROTEIN EL43"/>
    <property type="match status" value="1"/>
</dbReference>
<dbReference type="Pfam" id="PF01780">
    <property type="entry name" value="Ribosomal_L37ae"/>
    <property type="match status" value="1"/>
</dbReference>
<dbReference type="SUPFAM" id="SSF57829">
    <property type="entry name" value="Zn-binding ribosomal proteins"/>
    <property type="match status" value="1"/>
</dbReference>
<evidence type="ECO:0000250" key="1"/>
<evidence type="ECO:0000305" key="2"/>
<organism>
    <name type="scientific">Ostertagia ostertagi</name>
    <name type="common">Brown stomach worm</name>
    <name type="synonym">Strongylus ostertagi</name>
    <dbReference type="NCBI Taxonomy" id="6317"/>
    <lineage>
        <taxon>Eukaryota</taxon>
        <taxon>Metazoa</taxon>
        <taxon>Ecdysozoa</taxon>
        <taxon>Nematoda</taxon>
        <taxon>Chromadorea</taxon>
        <taxon>Rhabditida</taxon>
        <taxon>Rhabditina</taxon>
        <taxon>Rhabditomorpha</taxon>
        <taxon>Strongyloidea</taxon>
        <taxon>Trichostrongylidae</taxon>
        <taxon>Ostertagia</taxon>
    </lineage>
</organism>
<keyword id="KW-0479">Metal-binding</keyword>
<keyword id="KW-0687">Ribonucleoprotein</keyword>
<keyword id="KW-0689">Ribosomal protein</keyword>
<keyword id="KW-0862">Zinc</keyword>
<keyword id="KW-0863">Zinc-finger</keyword>
<feature type="initiator methionine" description="Removed" evidence="1">
    <location>
        <position position="1"/>
    </location>
</feature>
<feature type="chain" id="PRO_0000139826" description="Large ribosomal subunit protein eL43">
    <location>
        <begin position="2"/>
        <end position="91"/>
    </location>
</feature>
<feature type="zinc finger region" description="C4-type">
    <location>
        <begin position="39"/>
        <end position="60"/>
    </location>
</feature>
<sequence length="91" mass="10108">MAKRTKKVGIVGKYGTRYGASLRKMVKKMEITQHSRYTCPFCGKDAMRRGAVGIWNCSKCKKTVAGGAYVYGTVAAATVRSTVRRLRDLKE</sequence>
<name>RL37A_OSTOS</name>